<comment type="function">
    <text evidence="1">Catalyzes the conversion of 4-hydroxy-tetrahydrodipicolinate (HTPA) to tetrahydrodipicolinate.</text>
</comment>
<comment type="catalytic activity">
    <reaction evidence="1">
        <text>(S)-2,3,4,5-tetrahydrodipicolinate + NAD(+) + H2O = (2S,4S)-4-hydroxy-2,3,4,5-tetrahydrodipicolinate + NADH + H(+)</text>
        <dbReference type="Rhea" id="RHEA:35323"/>
        <dbReference type="ChEBI" id="CHEBI:15377"/>
        <dbReference type="ChEBI" id="CHEBI:15378"/>
        <dbReference type="ChEBI" id="CHEBI:16845"/>
        <dbReference type="ChEBI" id="CHEBI:57540"/>
        <dbReference type="ChEBI" id="CHEBI:57945"/>
        <dbReference type="ChEBI" id="CHEBI:67139"/>
        <dbReference type="EC" id="1.17.1.8"/>
    </reaction>
</comment>
<comment type="catalytic activity">
    <reaction evidence="1">
        <text>(S)-2,3,4,5-tetrahydrodipicolinate + NADP(+) + H2O = (2S,4S)-4-hydroxy-2,3,4,5-tetrahydrodipicolinate + NADPH + H(+)</text>
        <dbReference type="Rhea" id="RHEA:35331"/>
        <dbReference type="ChEBI" id="CHEBI:15377"/>
        <dbReference type="ChEBI" id="CHEBI:15378"/>
        <dbReference type="ChEBI" id="CHEBI:16845"/>
        <dbReference type="ChEBI" id="CHEBI:57783"/>
        <dbReference type="ChEBI" id="CHEBI:58349"/>
        <dbReference type="ChEBI" id="CHEBI:67139"/>
        <dbReference type="EC" id="1.17.1.8"/>
    </reaction>
</comment>
<comment type="pathway">
    <text evidence="1">Amino-acid biosynthesis; L-lysine biosynthesis via DAP pathway; (S)-tetrahydrodipicolinate from L-aspartate: step 4/4.</text>
</comment>
<comment type="subcellular location">
    <subcellularLocation>
        <location evidence="1">Cytoplasm</location>
    </subcellularLocation>
</comment>
<comment type="similarity">
    <text evidence="1">Belongs to the DapB family.</text>
</comment>
<comment type="caution">
    <text evidence="2">Was originally thought to be a dihydrodipicolinate reductase (DHDPR), catalyzing the conversion of dihydrodipicolinate to tetrahydrodipicolinate. However, it was shown in E.coli that the substrate of the enzymatic reaction is not dihydrodipicolinate (DHDP) but in fact (2S,4S)-4-hydroxy-2,3,4,5-tetrahydrodipicolinic acid (HTPA), the product released by the DapA-catalyzed reaction.</text>
</comment>
<organism>
    <name type="scientific">Mycobacterium bovis (strain BCG / Tokyo 172 / ATCC 35737 / TMC 1019)</name>
    <dbReference type="NCBI Taxonomy" id="561275"/>
    <lineage>
        <taxon>Bacteria</taxon>
        <taxon>Bacillati</taxon>
        <taxon>Actinomycetota</taxon>
        <taxon>Actinomycetes</taxon>
        <taxon>Mycobacteriales</taxon>
        <taxon>Mycobacteriaceae</taxon>
        <taxon>Mycobacterium</taxon>
        <taxon>Mycobacterium tuberculosis complex</taxon>
    </lineage>
</organism>
<gene>
    <name evidence="1" type="primary">dapB</name>
    <name type="ordered locus">JTY_2784</name>
</gene>
<sequence length="245" mass="25745">MRVGVLGAKGKVGATMVRAVAAADDLTLSAELDAGDPLSLLTDGNTEVVIDFTHPDVVMGNLEFLIDNGIHAVVGTTGFTAERFQQVESWLVAKPNTSVLIAPNFAIGAVLSMHFAKQAARFFDSAEVIELHHPHKADAPSGTAARTAKLIAEARKGLPPNPDATSTSLPGARGADVDGIPVHAVRLAGLVAHQEVLFGTEGEILTIRHDSLDRTSFVPGVLLAVRRIAERPGLTVGLEPLLDLH</sequence>
<feature type="chain" id="PRO_1000118861" description="4-hydroxy-tetrahydrodipicolinate reductase">
    <location>
        <begin position="1"/>
        <end position="245"/>
    </location>
</feature>
<feature type="active site" description="Proton donor/acceptor" evidence="1">
    <location>
        <position position="132"/>
    </location>
</feature>
<feature type="active site" description="Proton donor" evidence="1">
    <location>
        <position position="136"/>
    </location>
</feature>
<feature type="binding site" evidence="1">
    <location>
        <begin position="7"/>
        <end position="12"/>
    </location>
    <ligand>
        <name>NAD(+)</name>
        <dbReference type="ChEBI" id="CHEBI:57540"/>
    </ligand>
</feature>
<feature type="binding site" evidence="1">
    <location>
        <begin position="75"/>
        <end position="77"/>
    </location>
    <ligand>
        <name>NAD(+)</name>
        <dbReference type="ChEBI" id="CHEBI:57540"/>
    </ligand>
</feature>
<feature type="binding site" evidence="1">
    <location>
        <begin position="102"/>
        <end position="105"/>
    </location>
    <ligand>
        <name>NAD(+)</name>
        <dbReference type="ChEBI" id="CHEBI:57540"/>
    </ligand>
</feature>
<feature type="binding site" evidence="1">
    <location>
        <position position="133"/>
    </location>
    <ligand>
        <name>(S)-2,3,4,5-tetrahydrodipicolinate</name>
        <dbReference type="ChEBI" id="CHEBI:16845"/>
    </ligand>
</feature>
<feature type="binding site" evidence="1">
    <location>
        <begin position="142"/>
        <end position="143"/>
    </location>
    <ligand>
        <name>(S)-2,3,4,5-tetrahydrodipicolinate</name>
        <dbReference type="ChEBI" id="CHEBI:16845"/>
    </ligand>
</feature>
<proteinExistence type="inferred from homology"/>
<accession>C1AFN6</accession>
<protein>
    <recommendedName>
        <fullName evidence="1">4-hydroxy-tetrahydrodipicolinate reductase</fullName>
        <shortName evidence="1">HTPA reductase</shortName>
        <ecNumber evidence="1">1.17.1.8</ecNumber>
    </recommendedName>
</protein>
<keyword id="KW-0028">Amino-acid biosynthesis</keyword>
<keyword id="KW-0963">Cytoplasm</keyword>
<keyword id="KW-0220">Diaminopimelate biosynthesis</keyword>
<keyword id="KW-0457">Lysine biosynthesis</keyword>
<keyword id="KW-0520">NAD</keyword>
<keyword id="KW-0521">NADP</keyword>
<keyword id="KW-0560">Oxidoreductase</keyword>
<dbReference type="EC" id="1.17.1.8" evidence="1"/>
<dbReference type="EMBL" id="AP010918">
    <property type="protein sequence ID" value="BAH27065.1"/>
    <property type="molecule type" value="Genomic_DNA"/>
</dbReference>
<dbReference type="RefSeq" id="WP_011799290.1">
    <property type="nucleotide sequence ID" value="NZ_CP014566.1"/>
</dbReference>
<dbReference type="SMR" id="C1AFN6"/>
<dbReference type="KEGG" id="mbt:JTY_2784"/>
<dbReference type="HOGENOM" id="CLU_047479_0_1_11"/>
<dbReference type="UniPathway" id="UPA00034">
    <property type="reaction ID" value="UER00018"/>
</dbReference>
<dbReference type="GO" id="GO:0005829">
    <property type="term" value="C:cytosol"/>
    <property type="evidence" value="ECO:0007669"/>
    <property type="project" value="TreeGrafter"/>
</dbReference>
<dbReference type="GO" id="GO:0008839">
    <property type="term" value="F:4-hydroxy-tetrahydrodipicolinate reductase"/>
    <property type="evidence" value="ECO:0007669"/>
    <property type="project" value="UniProtKB-EC"/>
</dbReference>
<dbReference type="GO" id="GO:0051287">
    <property type="term" value="F:NAD binding"/>
    <property type="evidence" value="ECO:0007669"/>
    <property type="project" value="UniProtKB-UniRule"/>
</dbReference>
<dbReference type="GO" id="GO:0050661">
    <property type="term" value="F:NADP binding"/>
    <property type="evidence" value="ECO:0007669"/>
    <property type="project" value="UniProtKB-UniRule"/>
</dbReference>
<dbReference type="GO" id="GO:0016726">
    <property type="term" value="F:oxidoreductase activity, acting on CH or CH2 groups, NAD or NADP as acceptor"/>
    <property type="evidence" value="ECO:0007669"/>
    <property type="project" value="UniProtKB-UniRule"/>
</dbReference>
<dbReference type="GO" id="GO:0019877">
    <property type="term" value="P:diaminopimelate biosynthetic process"/>
    <property type="evidence" value="ECO:0007669"/>
    <property type="project" value="UniProtKB-UniRule"/>
</dbReference>
<dbReference type="GO" id="GO:0009089">
    <property type="term" value="P:lysine biosynthetic process via diaminopimelate"/>
    <property type="evidence" value="ECO:0007669"/>
    <property type="project" value="UniProtKB-UniRule"/>
</dbReference>
<dbReference type="CDD" id="cd02274">
    <property type="entry name" value="DHDPR_N"/>
    <property type="match status" value="1"/>
</dbReference>
<dbReference type="FunFam" id="3.30.360.10:FF:000009">
    <property type="entry name" value="4-hydroxy-tetrahydrodipicolinate reductase"/>
    <property type="match status" value="1"/>
</dbReference>
<dbReference type="Gene3D" id="3.30.360.10">
    <property type="entry name" value="Dihydrodipicolinate Reductase, domain 2"/>
    <property type="match status" value="1"/>
</dbReference>
<dbReference type="Gene3D" id="3.40.50.720">
    <property type="entry name" value="NAD(P)-binding Rossmann-like Domain"/>
    <property type="match status" value="1"/>
</dbReference>
<dbReference type="HAMAP" id="MF_00102">
    <property type="entry name" value="DapB"/>
    <property type="match status" value="1"/>
</dbReference>
<dbReference type="InterPro" id="IPR022663">
    <property type="entry name" value="DapB_C"/>
</dbReference>
<dbReference type="InterPro" id="IPR000846">
    <property type="entry name" value="DapB_N"/>
</dbReference>
<dbReference type="InterPro" id="IPR022664">
    <property type="entry name" value="DapB_N_CS"/>
</dbReference>
<dbReference type="InterPro" id="IPR023940">
    <property type="entry name" value="DHDPR_bac"/>
</dbReference>
<dbReference type="InterPro" id="IPR036291">
    <property type="entry name" value="NAD(P)-bd_dom_sf"/>
</dbReference>
<dbReference type="NCBIfam" id="TIGR00036">
    <property type="entry name" value="dapB"/>
    <property type="match status" value="1"/>
</dbReference>
<dbReference type="PANTHER" id="PTHR20836:SF0">
    <property type="entry name" value="4-HYDROXY-TETRAHYDRODIPICOLINATE REDUCTASE 1, CHLOROPLASTIC-RELATED"/>
    <property type="match status" value="1"/>
</dbReference>
<dbReference type="PANTHER" id="PTHR20836">
    <property type="entry name" value="DIHYDRODIPICOLINATE REDUCTASE"/>
    <property type="match status" value="1"/>
</dbReference>
<dbReference type="Pfam" id="PF05173">
    <property type="entry name" value="DapB_C"/>
    <property type="match status" value="1"/>
</dbReference>
<dbReference type="Pfam" id="PF01113">
    <property type="entry name" value="DapB_N"/>
    <property type="match status" value="1"/>
</dbReference>
<dbReference type="PIRSF" id="PIRSF000161">
    <property type="entry name" value="DHPR"/>
    <property type="match status" value="1"/>
</dbReference>
<dbReference type="SUPFAM" id="SSF55347">
    <property type="entry name" value="Glyceraldehyde-3-phosphate dehydrogenase-like, C-terminal domain"/>
    <property type="match status" value="1"/>
</dbReference>
<dbReference type="SUPFAM" id="SSF51735">
    <property type="entry name" value="NAD(P)-binding Rossmann-fold domains"/>
    <property type="match status" value="1"/>
</dbReference>
<dbReference type="PROSITE" id="PS01298">
    <property type="entry name" value="DAPB"/>
    <property type="match status" value="1"/>
</dbReference>
<reference key="1">
    <citation type="journal article" date="2009" name="Vaccine">
        <title>Whole genome sequence analysis of Mycobacterium bovis bacillus Calmette-Guerin (BCG) Tokyo 172: a comparative study of BCG vaccine substrains.</title>
        <authorList>
            <person name="Seki M."/>
            <person name="Honda I."/>
            <person name="Fujita I."/>
            <person name="Yano I."/>
            <person name="Yamamoto S."/>
            <person name="Koyama A."/>
        </authorList>
    </citation>
    <scope>NUCLEOTIDE SEQUENCE [LARGE SCALE GENOMIC DNA]</scope>
    <source>
        <strain>BCG / Tokyo 172 / ATCC 35737 / TMC 1019</strain>
    </source>
</reference>
<evidence type="ECO:0000255" key="1">
    <source>
        <dbReference type="HAMAP-Rule" id="MF_00102"/>
    </source>
</evidence>
<evidence type="ECO:0000305" key="2"/>
<name>DAPB_MYCBT</name>